<dbReference type="EC" id="3.2.1.-" evidence="1"/>
<dbReference type="EMBL" id="BA000034">
    <property type="protein sequence ID" value="BAC64151.1"/>
    <property type="molecule type" value="Genomic_DNA"/>
</dbReference>
<dbReference type="RefSeq" id="WP_009880444.1">
    <property type="nucleotide sequence ID" value="NC_004606.1"/>
</dbReference>
<dbReference type="SMR" id="P0DC29"/>
<dbReference type="KEGG" id="sps:SPs1056"/>
<dbReference type="HOGENOM" id="CLU_046550_2_1_9"/>
<dbReference type="GO" id="GO:0016798">
    <property type="term" value="F:hydrolase activity, acting on glycosyl bonds"/>
    <property type="evidence" value="ECO:0007669"/>
    <property type="project" value="UniProtKB-KW"/>
</dbReference>
<dbReference type="CDD" id="cd02908">
    <property type="entry name" value="Macro_OAADPr_deacetylase"/>
    <property type="match status" value="1"/>
</dbReference>
<dbReference type="FunFam" id="3.40.220.10:FF:000018">
    <property type="entry name" value="Protein-ADP-ribose hydrolase"/>
    <property type="match status" value="1"/>
</dbReference>
<dbReference type="Gene3D" id="3.40.220.10">
    <property type="entry name" value="Leucine Aminopeptidase, subunit E, domain 1"/>
    <property type="match status" value="1"/>
</dbReference>
<dbReference type="InterPro" id="IPR002589">
    <property type="entry name" value="Macro_dom"/>
</dbReference>
<dbReference type="InterPro" id="IPR043472">
    <property type="entry name" value="Macro_dom-like"/>
</dbReference>
<dbReference type="NCBIfam" id="NF003163">
    <property type="entry name" value="PRK04143.1"/>
    <property type="match status" value="1"/>
</dbReference>
<dbReference type="PANTHER" id="PTHR11106:SF121">
    <property type="entry name" value="ADP-RIBOSE 1''-PHOSPHATE PHOSPHATASE"/>
    <property type="match status" value="1"/>
</dbReference>
<dbReference type="PANTHER" id="PTHR11106">
    <property type="entry name" value="GANGLIOSIDE INDUCED DIFFERENTIATION ASSOCIATED PROTEIN 2-RELATED"/>
    <property type="match status" value="1"/>
</dbReference>
<dbReference type="Pfam" id="PF01661">
    <property type="entry name" value="Macro"/>
    <property type="match status" value="1"/>
</dbReference>
<dbReference type="SMART" id="SM00506">
    <property type="entry name" value="A1pp"/>
    <property type="match status" value="1"/>
</dbReference>
<dbReference type="SUPFAM" id="SSF52949">
    <property type="entry name" value="Macro domain-like"/>
    <property type="match status" value="1"/>
</dbReference>
<dbReference type="PROSITE" id="PS51154">
    <property type="entry name" value="MACRO"/>
    <property type="match status" value="1"/>
</dbReference>
<accession>P0DC29</accession>
<accession>Q8K7D8</accession>
<name>ADPRH_STRPQ</name>
<keyword id="KW-0326">Glycosidase</keyword>
<keyword id="KW-0378">Hydrolase</keyword>
<keyword id="KW-0479">Metal-binding</keyword>
<keyword id="KW-0862">Zinc</keyword>
<proteinExistence type="inferred from homology"/>
<reference key="1">
    <citation type="journal article" date="2003" name="Genome Res.">
        <title>Genome sequence of an M3 strain of Streptococcus pyogenes reveals a large-scale genomic rearrangement in invasive strains and new insights into phage evolution.</title>
        <authorList>
            <person name="Nakagawa I."/>
            <person name="Kurokawa K."/>
            <person name="Yamashita A."/>
            <person name="Nakata M."/>
            <person name="Tomiyasu Y."/>
            <person name="Okahashi N."/>
            <person name="Kawabata S."/>
            <person name="Yamazaki K."/>
            <person name="Shiba T."/>
            <person name="Yasunaga T."/>
            <person name="Hayashi H."/>
            <person name="Hattori M."/>
            <person name="Hamada S."/>
        </authorList>
    </citation>
    <scope>NUCLEOTIDE SEQUENCE [LARGE SCALE GENOMIC DNA]</scope>
    <source>
        <strain>SSI-1</strain>
    </source>
</reference>
<feature type="chain" id="PRO_0000411402" description="Protein-ADP-ribose hydrolase">
    <location>
        <begin position="1"/>
        <end position="270"/>
    </location>
</feature>
<feature type="domain" description="Macro" evidence="2">
    <location>
        <begin position="73"/>
        <end position="267"/>
    </location>
</feature>
<feature type="binding site" evidence="1">
    <location>
        <position position="92"/>
    </location>
    <ligand>
        <name>ADP-D-ribose</name>
        <dbReference type="ChEBI" id="CHEBI:57967"/>
    </ligand>
</feature>
<feature type="binding site" evidence="1">
    <location>
        <position position="93"/>
    </location>
    <ligand>
        <name>ADP-D-ribose</name>
        <dbReference type="ChEBI" id="CHEBI:57967"/>
    </ligand>
</feature>
<feature type="binding site" evidence="1">
    <location>
        <position position="106"/>
    </location>
    <ligand>
        <name>ADP-D-ribose</name>
        <dbReference type="ChEBI" id="CHEBI:57967"/>
    </ligand>
</feature>
<feature type="binding site" evidence="1">
    <location>
        <position position="112"/>
    </location>
    <ligand>
        <name>Zn(2+)</name>
        <dbReference type="ChEBI" id="CHEBI:29105"/>
    </ligand>
</feature>
<feature type="binding site" evidence="1">
    <location>
        <position position="117"/>
    </location>
    <ligand>
        <name>Zn(2+)</name>
        <dbReference type="ChEBI" id="CHEBI:29105"/>
    </ligand>
</feature>
<feature type="binding site" evidence="1">
    <location>
        <position position="119"/>
    </location>
    <ligand>
        <name>ADP-D-ribose</name>
        <dbReference type="ChEBI" id="CHEBI:57967"/>
    </ligand>
</feature>
<feature type="binding site" evidence="1">
    <location>
        <position position="119"/>
    </location>
    <ligand>
        <name>Zn(2+)</name>
        <dbReference type="ChEBI" id="CHEBI:29105"/>
    </ligand>
</feature>
<feature type="binding site" evidence="1">
    <location>
        <position position="120"/>
    </location>
    <ligand>
        <name>ADP-D-ribose</name>
        <dbReference type="ChEBI" id="CHEBI:57967"/>
    </ligand>
</feature>
<feature type="binding site" evidence="1">
    <location>
        <position position="121"/>
    </location>
    <ligand>
        <name>ADP-D-ribose</name>
        <dbReference type="ChEBI" id="CHEBI:57967"/>
    </ligand>
</feature>
<feature type="binding site" evidence="1">
    <location>
        <position position="212"/>
    </location>
    <ligand>
        <name>ADP-D-ribose</name>
        <dbReference type="ChEBI" id="CHEBI:57967"/>
    </ligand>
</feature>
<feature type="binding site" evidence="1">
    <location>
        <position position="213"/>
    </location>
    <ligand>
        <name>ADP-D-ribose</name>
        <dbReference type="ChEBI" id="CHEBI:57967"/>
    </ligand>
</feature>
<feature type="binding site" evidence="1">
    <location>
        <position position="214"/>
    </location>
    <ligand>
        <name>ADP-D-ribose</name>
        <dbReference type="ChEBI" id="CHEBI:57967"/>
    </ligand>
</feature>
<feature type="binding site" evidence="1">
    <location>
        <position position="215"/>
    </location>
    <ligand>
        <name>ADP-D-ribose</name>
        <dbReference type="ChEBI" id="CHEBI:57967"/>
    </ligand>
</feature>
<feature type="binding site" evidence="1">
    <location>
        <position position="216"/>
    </location>
    <ligand>
        <name>ADP-D-ribose</name>
        <dbReference type="ChEBI" id="CHEBI:57967"/>
    </ligand>
</feature>
<evidence type="ECO:0000250" key="1">
    <source>
        <dbReference type="UniProtKB" id="P0DN70"/>
    </source>
</evidence>
<evidence type="ECO:0000255" key="2">
    <source>
        <dbReference type="PROSITE-ProRule" id="PRU00490"/>
    </source>
</evidence>
<evidence type="ECO:0000305" key="3"/>
<gene>
    <name type="ordered locus">SPs1056</name>
</gene>
<sequence length="270" mass="30055">MPSSFDLLGEMIGLLQTEQLTSSWACPLPNALTKRQDLWRALINQRPALPLSKDYLNLEDAYLDDWRASFVPVSVKDCQKTNYTSLFLYHGDIRYLAVDAIVNAANSELLGCFIPNHGCIDNAIHTFAGSRLRLACQAIMTEQGRKEAIGQAKLTSAYHLPASYIIHTVGPRITKGHHVSPIRADLLARCYRSSLDLAVKAGLTSLAFCSISTGEFGFPKKEAAQIAIKTVLKWQAEHPESKTLTIIFNTFTSEDKALYDTYLQKENNCE</sequence>
<organism>
    <name type="scientific">Streptococcus pyogenes serotype M3 (strain SSI-1)</name>
    <dbReference type="NCBI Taxonomy" id="193567"/>
    <lineage>
        <taxon>Bacteria</taxon>
        <taxon>Bacillati</taxon>
        <taxon>Bacillota</taxon>
        <taxon>Bacilli</taxon>
        <taxon>Lactobacillales</taxon>
        <taxon>Streptococcaceae</taxon>
        <taxon>Streptococcus</taxon>
    </lineage>
</organism>
<comment type="function">
    <text evidence="1">ADP-ribosylhydrolase that specifically reverses the SirTM-mediated mono-ADP-ribosylation at an asparatate residue of GcvH-L, by releasing ADP-ribose from the target protein (By similarity). May play a role in the regulation of the response to host-induced oxidative stress (By similarity).</text>
</comment>
<comment type="catalytic activity">
    <reaction evidence="1">
        <text>4-O-(ADP-D-ribosyl)-L-aspartyl-[protein] + H2O = L-aspartyl-[protein] + ADP-D-ribose + H(+)</text>
        <dbReference type="Rhea" id="RHEA:54428"/>
        <dbReference type="Rhea" id="RHEA-COMP:9867"/>
        <dbReference type="Rhea" id="RHEA-COMP:13832"/>
        <dbReference type="ChEBI" id="CHEBI:15377"/>
        <dbReference type="ChEBI" id="CHEBI:15378"/>
        <dbReference type="ChEBI" id="CHEBI:29961"/>
        <dbReference type="ChEBI" id="CHEBI:57967"/>
        <dbReference type="ChEBI" id="CHEBI:138102"/>
    </reaction>
    <physiologicalReaction direction="left-to-right" evidence="1">
        <dbReference type="Rhea" id="RHEA:54429"/>
    </physiologicalReaction>
</comment>
<comment type="cofactor">
    <cofactor evidence="1">
        <name>Zn(2+)</name>
        <dbReference type="ChEBI" id="CHEBI:29105"/>
    </cofactor>
    <text evidence="1">Binds 1 Zn(2+) ion per subunit.</text>
</comment>
<comment type="similarity">
    <text evidence="3">Belongs to the MacroD-type family. Zn-Macro subfamily.</text>
</comment>
<protein>
    <recommendedName>
        <fullName evidence="1">Protein-ADP-ribose hydrolase</fullName>
        <ecNumber evidence="1">3.2.1.-</ecNumber>
    </recommendedName>
</protein>